<protein>
    <recommendedName>
        <fullName evidence="1">Recombination-associated protein RdgC</fullName>
    </recommendedName>
</protein>
<name>RDGC_SALNS</name>
<evidence type="ECO:0000255" key="1">
    <source>
        <dbReference type="HAMAP-Rule" id="MF_00194"/>
    </source>
</evidence>
<sequence length="303" mass="33990">MLWFKNLMVYRLSRDITLRAEEMEKQLASMTFTPCGSQDMAKMGWVPPMGSHSDALTHTANGQIIICARKEEKILPSPVIKQALEAKIQKLEADQGRKLKKTEKDSLKDEVLHSLLPRAFSRFSQTMMWIDTINGLIMVDCASAKKAEDTLALLRKSLGSLPVVPLALENPIELTLTEWVRSGTVAQGFQLLDEAELKAMLEDGGVIRAKKQDLVSDEIAVHIEAGKVVTKLALDWQQRIQFVMCDDGSIKRLKFCDELRDQNEDIDREDFAQRFDADFILMTGELAALIQSLVEGLGGEAQR</sequence>
<reference key="1">
    <citation type="journal article" date="2011" name="J. Bacteriol.">
        <title>Comparative genomics of 28 Salmonella enterica isolates: evidence for CRISPR-mediated adaptive sublineage evolution.</title>
        <authorList>
            <person name="Fricke W.F."/>
            <person name="Mammel M.K."/>
            <person name="McDermott P.F."/>
            <person name="Tartera C."/>
            <person name="White D.G."/>
            <person name="Leclerc J.E."/>
            <person name="Ravel J."/>
            <person name="Cebula T.A."/>
        </authorList>
    </citation>
    <scope>NUCLEOTIDE SEQUENCE [LARGE SCALE GENOMIC DNA]</scope>
    <source>
        <strain>SL254</strain>
    </source>
</reference>
<comment type="function">
    <text evidence="1">May be involved in recombination.</text>
</comment>
<comment type="subcellular location">
    <subcellularLocation>
        <location evidence="1">Cytoplasm</location>
        <location evidence="1">Nucleoid</location>
    </subcellularLocation>
</comment>
<comment type="similarity">
    <text evidence="1">Belongs to the RdgC family.</text>
</comment>
<keyword id="KW-0963">Cytoplasm</keyword>
<keyword id="KW-0233">DNA recombination</keyword>
<dbReference type="EMBL" id="CP001113">
    <property type="protein sequence ID" value="ACF64557.1"/>
    <property type="molecule type" value="Genomic_DNA"/>
</dbReference>
<dbReference type="RefSeq" id="WP_000964301.1">
    <property type="nucleotide sequence ID" value="NZ_CCMR01000003.1"/>
</dbReference>
<dbReference type="SMR" id="B4SWN2"/>
<dbReference type="KEGG" id="see:SNSL254_A0435"/>
<dbReference type="HOGENOM" id="CLU_052038_1_1_6"/>
<dbReference type="Proteomes" id="UP000008824">
    <property type="component" value="Chromosome"/>
</dbReference>
<dbReference type="GO" id="GO:0043590">
    <property type="term" value="C:bacterial nucleoid"/>
    <property type="evidence" value="ECO:0007669"/>
    <property type="project" value="TreeGrafter"/>
</dbReference>
<dbReference type="GO" id="GO:0005737">
    <property type="term" value="C:cytoplasm"/>
    <property type="evidence" value="ECO:0007669"/>
    <property type="project" value="UniProtKB-UniRule"/>
</dbReference>
<dbReference type="GO" id="GO:0003690">
    <property type="term" value="F:double-stranded DNA binding"/>
    <property type="evidence" value="ECO:0007669"/>
    <property type="project" value="TreeGrafter"/>
</dbReference>
<dbReference type="GO" id="GO:0006310">
    <property type="term" value="P:DNA recombination"/>
    <property type="evidence" value="ECO:0007669"/>
    <property type="project" value="UniProtKB-UniRule"/>
</dbReference>
<dbReference type="GO" id="GO:0000018">
    <property type="term" value="P:regulation of DNA recombination"/>
    <property type="evidence" value="ECO:0007669"/>
    <property type="project" value="TreeGrafter"/>
</dbReference>
<dbReference type="HAMAP" id="MF_00194">
    <property type="entry name" value="RdgC"/>
    <property type="match status" value="1"/>
</dbReference>
<dbReference type="InterPro" id="IPR007476">
    <property type="entry name" value="RdgC"/>
</dbReference>
<dbReference type="NCBIfam" id="NF001460">
    <property type="entry name" value="PRK00321.1-1"/>
    <property type="match status" value="1"/>
</dbReference>
<dbReference type="NCBIfam" id="NF001462">
    <property type="entry name" value="PRK00321.1-3"/>
    <property type="match status" value="1"/>
</dbReference>
<dbReference type="NCBIfam" id="NF001464">
    <property type="entry name" value="PRK00321.1-5"/>
    <property type="match status" value="1"/>
</dbReference>
<dbReference type="PANTHER" id="PTHR38103">
    <property type="entry name" value="RECOMBINATION-ASSOCIATED PROTEIN RDGC"/>
    <property type="match status" value="1"/>
</dbReference>
<dbReference type="PANTHER" id="PTHR38103:SF1">
    <property type="entry name" value="RECOMBINATION-ASSOCIATED PROTEIN RDGC"/>
    <property type="match status" value="1"/>
</dbReference>
<dbReference type="Pfam" id="PF04381">
    <property type="entry name" value="RdgC"/>
    <property type="match status" value="1"/>
</dbReference>
<accession>B4SWN2</accession>
<proteinExistence type="inferred from homology"/>
<feature type="chain" id="PRO_1000099072" description="Recombination-associated protein RdgC">
    <location>
        <begin position="1"/>
        <end position="303"/>
    </location>
</feature>
<organism>
    <name type="scientific">Salmonella newport (strain SL254)</name>
    <dbReference type="NCBI Taxonomy" id="423368"/>
    <lineage>
        <taxon>Bacteria</taxon>
        <taxon>Pseudomonadati</taxon>
        <taxon>Pseudomonadota</taxon>
        <taxon>Gammaproteobacteria</taxon>
        <taxon>Enterobacterales</taxon>
        <taxon>Enterobacteriaceae</taxon>
        <taxon>Salmonella</taxon>
    </lineage>
</organism>
<gene>
    <name evidence="1" type="primary">rdgC</name>
    <name type="ordered locus">SNSL254_A0435</name>
</gene>